<proteinExistence type="inferred from homology"/>
<evidence type="ECO:0000255" key="1">
    <source>
        <dbReference type="HAMAP-Rule" id="MF_01351"/>
    </source>
</evidence>
<sequence length="180" mass="20381">MTLKELVVGFGTQVRSLWMIGLHAFAKRETKMYPEEPVYLPPRYRGRIVLTRDPDGAERCVACNLCAVACPVGCISLQKAETEDGRWYPEFFRINFSRCIFCGMCEEACPTTALQLTPDFEMGEFRRQDLVYEKEDLLISGPGKYPDYNFYRMAGMAIDGKAKGEAENEAKPIDVKGLLP</sequence>
<name>NUOI_EDWI9</name>
<comment type="function">
    <text evidence="1">NDH-1 shuttles electrons from NADH, via FMN and iron-sulfur (Fe-S) centers, to quinones in the respiratory chain. The immediate electron acceptor for the enzyme in this species is believed to be ubiquinone. Couples the redox reaction to proton translocation (for every two electrons transferred, four hydrogen ions are translocated across the cytoplasmic membrane), and thus conserves the redox energy in a proton gradient.</text>
</comment>
<comment type="catalytic activity">
    <reaction evidence="1">
        <text>a quinone + NADH + 5 H(+)(in) = a quinol + NAD(+) + 4 H(+)(out)</text>
        <dbReference type="Rhea" id="RHEA:57888"/>
        <dbReference type="ChEBI" id="CHEBI:15378"/>
        <dbReference type="ChEBI" id="CHEBI:24646"/>
        <dbReference type="ChEBI" id="CHEBI:57540"/>
        <dbReference type="ChEBI" id="CHEBI:57945"/>
        <dbReference type="ChEBI" id="CHEBI:132124"/>
    </reaction>
</comment>
<comment type="cofactor">
    <cofactor evidence="1">
        <name>[4Fe-4S] cluster</name>
        <dbReference type="ChEBI" id="CHEBI:49883"/>
    </cofactor>
    <text evidence="1">Binds 2 [4Fe-4S] clusters per subunit.</text>
</comment>
<comment type="subunit">
    <text evidence="1">NDH-1 is composed of 13 different subunits. Subunits NuoA, H, J, K, L, M, N constitute the membrane sector of the complex.</text>
</comment>
<comment type="subcellular location">
    <subcellularLocation>
        <location evidence="1">Cell inner membrane</location>
        <topology evidence="1">Peripheral membrane protein</topology>
    </subcellularLocation>
</comment>
<comment type="similarity">
    <text evidence="1">Belongs to the complex I 23 kDa subunit family.</text>
</comment>
<dbReference type="EC" id="7.1.1.-" evidence="1"/>
<dbReference type="EMBL" id="CP001600">
    <property type="protein sequence ID" value="ACR69840.1"/>
    <property type="molecule type" value="Genomic_DNA"/>
</dbReference>
<dbReference type="RefSeq" id="WP_005288223.1">
    <property type="nucleotide sequence ID" value="NZ_CP169062.1"/>
</dbReference>
<dbReference type="SMR" id="C5B8H9"/>
<dbReference type="STRING" id="67780.B6E78_05360"/>
<dbReference type="GeneID" id="93124729"/>
<dbReference type="KEGG" id="eic:NT01EI_2672"/>
<dbReference type="HOGENOM" id="CLU_067218_4_3_6"/>
<dbReference type="OrthoDB" id="9808559at2"/>
<dbReference type="Proteomes" id="UP000001485">
    <property type="component" value="Chromosome"/>
</dbReference>
<dbReference type="GO" id="GO:0005886">
    <property type="term" value="C:plasma membrane"/>
    <property type="evidence" value="ECO:0007669"/>
    <property type="project" value="UniProtKB-SubCell"/>
</dbReference>
<dbReference type="GO" id="GO:0051539">
    <property type="term" value="F:4 iron, 4 sulfur cluster binding"/>
    <property type="evidence" value="ECO:0007669"/>
    <property type="project" value="UniProtKB-KW"/>
</dbReference>
<dbReference type="GO" id="GO:0005506">
    <property type="term" value="F:iron ion binding"/>
    <property type="evidence" value="ECO:0007669"/>
    <property type="project" value="UniProtKB-UniRule"/>
</dbReference>
<dbReference type="GO" id="GO:0050136">
    <property type="term" value="F:NADH:ubiquinone reductase (non-electrogenic) activity"/>
    <property type="evidence" value="ECO:0007669"/>
    <property type="project" value="UniProtKB-UniRule"/>
</dbReference>
<dbReference type="GO" id="GO:0048038">
    <property type="term" value="F:quinone binding"/>
    <property type="evidence" value="ECO:0007669"/>
    <property type="project" value="UniProtKB-KW"/>
</dbReference>
<dbReference type="GO" id="GO:0009060">
    <property type="term" value="P:aerobic respiration"/>
    <property type="evidence" value="ECO:0007669"/>
    <property type="project" value="TreeGrafter"/>
</dbReference>
<dbReference type="FunFam" id="3.30.70.3270:FF:000002">
    <property type="entry name" value="NADH-quinone oxidoreductase subunit I"/>
    <property type="match status" value="1"/>
</dbReference>
<dbReference type="Gene3D" id="3.30.70.3270">
    <property type="match status" value="1"/>
</dbReference>
<dbReference type="HAMAP" id="MF_01351">
    <property type="entry name" value="NDH1_NuoI"/>
    <property type="match status" value="1"/>
</dbReference>
<dbReference type="InterPro" id="IPR017896">
    <property type="entry name" value="4Fe4S_Fe-S-bd"/>
</dbReference>
<dbReference type="InterPro" id="IPR017900">
    <property type="entry name" value="4Fe4S_Fe_S_CS"/>
</dbReference>
<dbReference type="InterPro" id="IPR010226">
    <property type="entry name" value="NADH_quinone_OxRdtase_chainI"/>
</dbReference>
<dbReference type="NCBIfam" id="TIGR01971">
    <property type="entry name" value="NuoI"/>
    <property type="match status" value="1"/>
</dbReference>
<dbReference type="NCBIfam" id="NF004536">
    <property type="entry name" value="PRK05888.1-1"/>
    <property type="match status" value="1"/>
</dbReference>
<dbReference type="PANTHER" id="PTHR10849:SF20">
    <property type="entry name" value="NADH DEHYDROGENASE [UBIQUINONE] IRON-SULFUR PROTEIN 8, MITOCHONDRIAL"/>
    <property type="match status" value="1"/>
</dbReference>
<dbReference type="PANTHER" id="PTHR10849">
    <property type="entry name" value="NADH DEHYDROGENASE UBIQUINONE IRON-SULFUR PROTEIN 8, MITOCHONDRIAL"/>
    <property type="match status" value="1"/>
</dbReference>
<dbReference type="Pfam" id="PF12838">
    <property type="entry name" value="Fer4_7"/>
    <property type="match status" value="1"/>
</dbReference>
<dbReference type="SUPFAM" id="SSF54862">
    <property type="entry name" value="4Fe-4S ferredoxins"/>
    <property type="match status" value="1"/>
</dbReference>
<dbReference type="PROSITE" id="PS00198">
    <property type="entry name" value="4FE4S_FER_1"/>
    <property type="match status" value="2"/>
</dbReference>
<dbReference type="PROSITE" id="PS51379">
    <property type="entry name" value="4FE4S_FER_2"/>
    <property type="match status" value="2"/>
</dbReference>
<protein>
    <recommendedName>
        <fullName evidence="1">NADH-quinone oxidoreductase subunit I</fullName>
        <ecNumber evidence="1">7.1.1.-</ecNumber>
    </recommendedName>
    <alternativeName>
        <fullName evidence="1">NADH dehydrogenase I subunit I</fullName>
    </alternativeName>
    <alternativeName>
        <fullName evidence="1">NDH-1 subunit I</fullName>
    </alternativeName>
</protein>
<organism>
    <name type="scientific">Edwardsiella ictaluri (strain 93-146)</name>
    <dbReference type="NCBI Taxonomy" id="634503"/>
    <lineage>
        <taxon>Bacteria</taxon>
        <taxon>Pseudomonadati</taxon>
        <taxon>Pseudomonadota</taxon>
        <taxon>Gammaproteobacteria</taxon>
        <taxon>Enterobacterales</taxon>
        <taxon>Hafniaceae</taxon>
        <taxon>Edwardsiella</taxon>
    </lineage>
</organism>
<feature type="chain" id="PRO_1000214848" description="NADH-quinone oxidoreductase subunit I">
    <location>
        <begin position="1"/>
        <end position="180"/>
    </location>
</feature>
<feature type="domain" description="4Fe-4S ferredoxin-type 1" evidence="1">
    <location>
        <begin position="48"/>
        <end position="80"/>
    </location>
</feature>
<feature type="domain" description="4Fe-4S ferredoxin-type 2" evidence="1">
    <location>
        <begin position="90"/>
        <end position="119"/>
    </location>
</feature>
<feature type="binding site" evidence="1">
    <location>
        <position position="60"/>
    </location>
    <ligand>
        <name>[4Fe-4S] cluster</name>
        <dbReference type="ChEBI" id="CHEBI:49883"/>
        <label>1</label>
    </ligand>
</feature>
<feature type="binding site" evidence="1">
    <location>
        <position position="63"/>
    </location>
    <ligand>
        <name>[4Fe-4S] cluster</name>
        <dbReference type="ChEBI" id="CHEBI:49883"/>
        <label>1</label>
    </ligand>
</feature>
<feature type="binding site" evidence="1">
    <location>
        <position position="66"/>
    </location>
    <ligand>
        <name>[4Fe-4S] cluster</name>
        <dbReference type="ChEBI" id="CHEBI:49883"/>
        <label>1</label>
    </ligand>
</feature>
<feature type="binding site" evidence="1">
    <location>
        <position position="70"/>
    </location>
    <ligand>
        <name>[4Fe-4S] cluster</name>
        <dbReference type="ChEBI" id="CHEBI:49883"/>
        <label>2</label>
    </ligand>
</feature>
<feature type="binding site" evidence="1">
    <location>
        <position position="99"/>
    </location>
    <ligand>
        <name>[4Fe-4S] cluster</name>
        <dbReference type="ChEBI" id="CHEBI:49883"/>
        <label>2</label>
    </ligand>
</feature>
<feature type="binding site" evidence="1">
    <location>
        <position position="102"/>
    </location>
    <ligand>
        <name>[4Fe-4S] cluster</name>
        <dbReference type="ChEBI" id="CHEBI:49883"/>
        <label>2</label>
    </ligand>
</feature>
<feature type="binding site" evidence="1">
    <location>
        <position position="105"/>
    </location>
    <ligand>
        <name>[4Fe-4S] cluster</name>
        <dbReference type="ChEBI" id="CHEBI:49883"/>
        <label>2</label>
    </ligand>
</feature>
<feature type="binding site" evidence="1">
    <location>
        <position position="109"/>
    </location>
    <ligand>
        <name>[4Fe-4S] cluster</name>
        <dbReference type="ChEBI" id="CHEBI:49883"/>
        <label>1</label>
    </ligand>
</feature>
<accession>C5B8H9</accession>
<gene>
    <name evidence="1" type="primary">nuoI</name>
    <name type="ordered locus">NT01EI_2672</name>
</gene>
<reference key="1">
    <citation type="submission" date="2009-03" db="EMBL/GenBank/DDBJ databases">
        <title>Complete genome sequence of Edwardsiella ictaluri 93-146.</title>
        <authorList>
            <person name="Williams M.L."/>
            <person name="Gillaspy A.F."/>
            <person name="Dyer D.W."/>
            <person name="Thune R.L."/>
            <person name="Waldbieser G.C."/>
            <person name="Schuster S.C."/>
            <person name="Gipson J."/>
            <person name="Zaitshik J."/>
            <person name="Landry C."/>
            <person name="Lawrence M.L."/>
        </authorList>
    </citation>
    <scope>NUCLEOTIDE SEQUENCE [LARGE SCALE GENOMIC DNA]</scope>
    <source>
        <strain>93-146</strain>
    </source>
</reference>
<keyword id="KW-0004">4Fe-4S</keyword>
<keyword id="KW-0997">Cell inner membrane</keyword>
<keyword id="KW-1003">Cell membrane</keyword>
<keyword id="KW-0408">Iron</keyword>
<keyword id="KW-0411">Iron-sulfur</keyword>
<keyword id="KW-0472">Membrane</keyword>
<keyword id="KW-0479">Metal-binding</keyword>
<keyword id="KW-0520">NAD</keyword>
<keyword id="KW-0874">Quinone</keyword>
<keyword id="KW-0677">Repeat</keyword>
<keyword id="KW-1278">Translocase</keyword>
<keyword id="KW-0830">Ubiquinone</keyword>